<proteinExistence type="inferred from homology"/>
<comment type="function">
    <text evidence="1">Bifunctional serine/threonine kinase and phosphorylase involved in the regulation of the phosphoenolpyruvate synthase (PEPS) by catalyzing its phosphorylation/dephosphorylation.</text>
</comment>
<comment type="catalytic activity">
    <reaction evidence="1">
        <text>[pyruvate, water dikinase] + ADP = [pyruvate, water dikinase]-phosphate + AMP + H(+)</text>
        <dbReference type="Rhea" id="RHEA:46020"/>
        <dbReference type="Rhea" id="RHEA-COMP:11425"/>
        <dbReference type="Rhea" id="RHEA-COMP:11426"/>
        <dbReference type="ChEBI" id="CHEBI:15378"/>
        <dbReference type="ChEBI" id="CHEBI:43176"/>
        <dbReference type="ChEBI" id="CHEBI:68546"/>
        <dbReference type="ChEBI" id="CHEBI:456215"/>
        <dbReference type="ChEBI" id="CHEBI:456216"/>
        <dbReference type="EC" id="2.7.11.33"/>
    </reaction>
</comment>
<comment type="catalytic activity">
    <reaction evidence="1">
        <text>[pyruvate, water dikinase]-phosphate + phosphate + H(+) = [pyruvate, water dikinase] + diphosphate</text>
        <dbReference type="Rhea" id="RHEA:48580"/>
        <dbReference type="Rhea" id="RHEA-COMP:11425"/>
        <dbReference type="Rhea" id="RHEA-COMP:11426"/>
        <dbReference type="ChEBI" id="CHEBI:15378"/>
        <dbReference type="ChEBI" id="CHEBI:33019"/>
        <dbReference type="ChEBI" id="CHEBI:43176"/>
        <dbReference type="ChEBI" id="CHEBI:43474"/>
        <dbReference type="ChEBI" id="CHEBI:68546"/>
        <dbReference type="EC" id="2.7.4.28"/>
    </reaction>
</comment>
<comment type="similarity">
    <text evidence="1">Belongs to the pyruvate, phosphate/water dikinase regulatory protein family. PSRP subfamily.</text>
</comment>
<reference key="1">
    <citation type="journal article" date="2004" name="Proc. Natl. Acad. Sci. U.S.A.">
        <title>Genome sequence of the enterobacterial phytopathogen Erwinia carotovora subsp. atroseptica and characterization of virulence factors.</title>
        <authorList>
            <person name="Bell K.S."/>
            <person name="Sebaihia M."/>
            <person name="Pritchard L."/>
            <person name="Holden M.T.G."/>
            <person name="Hyman L.J."/>
            <person name="Holeva M.C."/>
            <person name="Thomson N.R."/>
            <person name="Bentley S.D."/>
            <person name="Churcher L.J.C."/>
            <person name="Mungall K."/>
            <person name="Atkin R."/>
            <person name="Bason N."/>
            <person name="Brooks K."/>
            <person name="Chillingworth T."/>
            <person name="Clark K."/>
            <person name="Doggett J."/>
            <person name="Fraser A."/>
            <person name="Hance Z."/>
            <person name="Hauser H."/>
            <person name="Jagels K."/>
            <person name="Moule S."/>
            <person name="Norbertczak H."/>
            <person name="Ormond D."/>
            <person name="Price C."/>
            <person name="Quail M.A."/>
            <person name="Sanders M."/>
            <person name="Walker D."/>
            <person name="Whitehead S."/>
            <person name="Salmond G.P.C."/>
            <person name="Birch P.R.J."/>
            <person name="Parkhill J."/>
            <person name="Toth I.K."/>
        </authorList>
    </citation>
    <scope>NUCLEOTIDE SEQUENCE [LARGE SCALE GENOMIC DNA]</scope>
    <source>
        <strain>SCRI 1043 / ATCC BAA-672</strain>
    </source>
</reference>
<sequence>MERSVFYVSDGTAITAEVLGHAVLSQFPVNTVSYTLPFVESEVRAKAVCEQINTLYQQTGVRPLVFYSIVTPTVRNIITSSDGFCQDIVQALVAPLQEELNIPPTPVANRTHGLTANNLGKYDARIAAIDYTLAHDDGISLRNLDQAQVILLGVSRCGKTPTSLYLAMQFGIRAANYPFIADDMDNLRLPDALKPFQHKLFGLTIDAERLAAIREERRGNSRYASLRQCRMELNEVEALFRKHQIKYLNTTNYSVEEISAKIIDILGMSRRMY</sequence>
<name>PSRP_PECAS</name>
<protein>
    <recommendedName>
        <fullName evidence="1">Putative phosphoenolpyruvate synthase regulatory protein</fullName>
        <shortName evidence="1">PEP synthase regulatory protein</shortName>
        <shortName evidence="1">PSRP</shortName>
        <ecNumber evidence="1">2.7.11.33</ecNumber>
        <ecNumber evidence="1">2.7.4.28</ecNumber>
    </recommendedName>
    <alternativeName>
        <fullName evidence="1">Pyruvate, water dikinase regulatory protein</fullName>
    </alternativeName>
</protein>
<keyword id="KW-0418">Kinase</keyword>
<keyword id="KW-0547">Nucleotide-binding</keyword>
<keyword id="KW-1185">Reference proteome</keyword>
<keyword id="KW-0723">Serine/threonine-protein kinase</keyword>
<keyword id="KW-0808">Transferase</keyword>
<accession>Q6D636</accession>
<feature type="chain" id="PRO_0000196658" description="Putative phosphoenolpyruvate synthase regulatory protein">
    <location>
        <begin position="1"/>
        <end position="273"/>
    </location>
</feature>
<feature type="binding site" evidence="1">
    <location>
        <begin position="153"/>
        <end position="160"/>
    </location>
    <ligand>
        <name>ADP</name>
        <dbReference type="ChEBI" id="CHEBI:456216"/>
    </ligand>
</feature>
<gene>
    <name type="ordered locus">ECA1852</name>
</gene>
<dbReference type="EC" id="2.7.11.33" evidence="1"/>
<dbReference type="EC" id="2.7.4.28" evidence="1"/>
<dbReference type="EMBL" id="BX950851">
    <property type="protein sequence ID" value="CAG74755.1"/>
    <property type="molecule type" value="Genomic_DNA"/>
</dbReference>
<dbReference type="RefSeq" id="WP_011093423.1">
    <property type="nucleotide sequence ID" value="NC_004547.2"/>
</dbReference>
<dbReference type="SMR" id="Q6D636"/>
<dbReference type="STRING" id="218491.ECA1852"/>
<dbReference type="KEGG" id="eca:ECA1852"/>
<dbReference type="PATRIC" id="fig|218491.5.peg.1881"/>
<dbReference type="eggNOG" id="COG1806">
    <property type="taxonomic scope" value="Bacteria"/>
</dbReference>
<dbReference type="HOGENOM" id="CLU_046206_1_0_6"/>
<dbReference type="OrthoDB" id="9782201at2"/>
<dbReference type="Proteomes" id="UP000007966">
    <property type="component" value="Chromosome"/>
</dbReference>
<dbReference type="GO" id="GO:0043531">
    <property type="term" value="F:ADP binding"/>
    <property type="evidence" value="ECO:0007669"/>
    <property type="project" value="UniProtKB-UniRule"/>
</dbReference>
<dbReference type="GO" id="GO:0005524">
    <property type="term" value="F:ATP binding"/>
    <property type="evidence" value="ECO:0007669"/>
    <property type="project" value="InterPro"/>
</dbReference>
<dbReference type="GO" id="GO:0016776">
    <property type="term" value="F:phosphotransferase activity, phosphate group as acceptor"/>
    <property type="evidence" value="ECO:0007669"/>
    <property type="project" value="UniProtKB-UniRule"/>
</dbReference>
<dbReference type="GO" id="GO:0004674">
    <property type="term" value="F:protein serine/threonine kinase activity"/>
    <property type="evidence" value="ECO:0007669"/>
    <property type="project" value="UniProtKB-UniRule"/>
</dbReference>
<dbReference type="HAMAP" id="MF_01062">
    <property type="entry name" value="PSRP"/>
    <property type="match status" value="1"/>
</dbReference>
<dbReference type="InterPro" id="IPR005177">
    <property type="entry name" value="Kinase-pyrophosphorylase"/>
</dbReference>
<dbReference type="InterPro" id="IPR026530">
    <property type="entry name" value="PSRP"/>
</dbReference>
<dbReference type="NCBIfam" id="NF003742">
    <property type="entry name" value="PRK05339.1"/>
    <property type="match status" value="1"/>
</dbReference>
<dbReference type="PANTHER" id="PTHR31756">
    <property type="entry name" value="PYRUVATE, PHOSPHATE DIKINASE REGULATORY PROTEIN 1, CHLOROPLASTIC"/>
    <property type="match status" value="1"/>
</dbReference>
<dbReference type="PANTHER" id="PTHR31756:SF3">
    <property type="entry name" value="PYRUVATE, PHOSPHATE DIKINASE REGULATORY PROTEIN 1, CHLOROPLASTIC"/>
    <property type="match status" value="1"/>
</dbReference>
<dbReference type="Pfam" id="PF03618">
    <property type="entry name" value="Kinase-PPPase"/>
    <property type="match status" value="1"/>
</dbReference>
<organism>
    <name type="scientific">Pectobacterium atrosepticum (strain SCRI 1043 / ATCC BAA-672)</name>
    <name type="common">Erwinia carotovora subsp. atroseptica</name>
    <dbReference type="NCBI Taxonomy" id="218491"/>
    <lineage>
        <taxon>Bacteria</taxon>
        <taxon>Pseudomonadati</taxon>
        <taxon>Pseudomonadota</taxon>
        <taxon>Gammaproteobacteria</taxon>
        <taxon>Enterobacterales</taxon>
        <taxon>Pectobacteriaceae</taxon>
        <taxon>Pectobacterium</taxon>
    </lineage>
</organism>
<evidence type="ECO:0000255" key="1">
    <source>
        <dbReference type="HAMAP-Rule" id="MF_01062"/>
    </source>
</evidence>